<gene>
    <name evidence="1" type="primary">argB</name>
    <name type="ordered locus">Abu_2068</name>
</gene>
<comment type="function">
    <text evidence="1">Catalyzes the ATP-dependent phosphorylation of N-acetyl-L-glutamate.</text>
</comment>
<comment type="catalytic activity">
    <reaction evidence="1">
        <text>N-acetyl-L-glutamate + ATP = N-acetyl-L-glutamyl 5-phosphate + ADP</text>
        <dbReference type="Rhea" id="RHEA:14629"/>
        <dbReference type="ChEBI" id="CHEBI:30616"/>
        <dbReference type="ChEBI" id="CHEBI:44337"/>
        <dbReference type="ChEBI" id="CHEBI:57936"/>
        <dbReference type="ChEBI" id="CHEBI:456216"/>
        <dbReference type="EC" id="2.7.2.8"/>
    </reaction>
</comment>
<comment type="pathway">
    <text evidence="1">Amino-acid biosynthesis; L-arginine biosynthesis; N(2)-acetyl-L-ornithine from L-glutamate: step 2/4.</text>
</comment>
<comment type="subcellular location">
    <subcellularLocation>
        <location evidence="1">Cytoplasm</location>
    </subcellularLocation>
</comment>
<comment type="similarity">
    <text evidence="1">Belongs to the acetylglutamate kinase family. ArgB subfamily.</text>
</comment>
<reference key="1">
    <citation type="journal article" date="2007" name="PLoS ONE">
        <title>The complete genome sequence and analysis of the Epsilonproteobacterium Arcobacter butzleri.</title>
        <authorList>
            <person name="Miller W.G."/>
            <person name="Parker C.T."/>
            <person name="Rubenfield M."/>
            <person name="Mendz G.L."/>
            <person name="Woesten M.M.S.M."/>
            <person name="Ussery D.W."/>
            <person name="Stolz J.F."/>
            <person name="Binnewies T.T."/>
            <person name="Hallin P.F."/>
            <person name="Wang G."/>
            <person name="Malek J.A."/>
            <person name="Rogosin A."/>
            <person name="Stanker L.H."/>
            <person name="Mandrell R.E."/>
        </authorList>
    </citation>
    <scope>NUCLEOTIDE SEQUENCE [LARGE SCALE GENOMIC DNA]</scope>
    <source>
        <strain>RM4018</strain>
    </source>
</reference>
<name>ARGB_ALIB4</name>
<dbReference type="EC" id="2.7.2.8" evidence="1"/>
<dbReference type="EMBL" id="CP000361">
    <property type="protein sequence ID" value="ABV68285.1"/>
    <property type="molecule type" value="Genomic_DNA"/>
</dbReference>
<dbReference type="RefSeq" id="WP_012147946.1">
    <property type="nucleotide sequence ID" value="NC_009850.1"/>
</dbReference>
<dbReference type="SMR" id="A8EWG2"/>
<dbReference type="STRING" id="367737.Abu_2068"/>
<dbReference type="GeneID" id="24304223"/>
<dbReference type="KEGG" id="abu:Abu_2068"/>
<dbReference type="eggNOG" id="COG0548">
    <property type="taxonomic scope" value="Bacteria"/>
</dbReference>
<dbReference type="HOGENOM" id="CLU_053680_0_0_7"/>
<dbReference type="UniPathway" id="UPA00068">
    <property type="reaction ID" value="UER00107"/>
</dbReference>
<dbReference type="Proteomes" id="UP000001136">
    <property type="component" value="Chromosome"/>
</dbReference>
<dbReference type="GO" id="GO:0005737">
    <property type="term" value="C:cytoplasm"/>
    <property type="evidence" value="ECO:0007669"/>
    <property type="project" value="UniProtKB-SubCell"/>
</dbReference>
<dbReference type="GO" id="GO:0003991">
    <property type="term" value="F:acetylglutamate kinase activity"/>
    <property type="evidence" value="ECO:0007669"/>
    <property type="project" value="UniProtKB-UniRule"/>
</dbReference>
<dbReference type="GO" id="GO:0005524">
    <property type="term" value="F:ATP binding"/>
    <property type="evidence" value="ECO:0007669"/>
    <property type="project" value="UniProtKB-UniRule"/>
</dbReference>
<dbReference type="GO" id="GO:0042450">
    <property type="term" value="P:arginine biosynthetic process via ornithine"/>
    <property type="evidence" value="ECO:0007669"/>
    <property type="project" value="UniProtKB-UniRule"/>
</dbReference>
<dbReference type="GO" id="GO:0006526">
    <property type="term" value="P:L-arginine biosynthetic process"/>
    <property type="evidence" value="ECO:0007669"/>
    <property type="project" value="UniProtKB-UniPathway"/>
</dbReference>
<dbReference type="CDD" id="cd04250">
    <property type="entry name" value="AAK_NAGK-C"/>
    <property type="match status" value="1"/>
</dbReference>
<dbReference type="FunFam" id="3.40.1160.10:FF:000004">
    <property type="entry name" value="Acetylglutamate kinase"/>
    <property type="match status" value="1"/>
</dbReference>
<dbReference type="Gene3D" id="3.40.1160.10">
    <property type="entry name" value="Acetylglutamate kinase-like"/>
    <property type="match status" value="1"/>
</dbReference>
<dbReference type="HAMAP" id="MF_00082">
    <property type="entry name" value="ArgB"/>
    <property type="match status" value="1"/>
</dbReference>
<dbReference type="InterPro" id="IPR036393">
    <property type="entry name" value="AceGlu_kinase-like_sf"/>
</dbReference>
<dbReference type="InterPro" id="IPR004662">
    <property type="entry name" value="AcgluKinase_fam"/>
</dbReference>
<dbReference type="InterPro" id="IPR037528">
    <property type="entry name" value="ArgB"/>
</dbReference>
<dbReference type="InterPro" id="IPR001048">
    <property type="entry name" value="Asp/Glu/Uridylate_kinase"/>
</dbReference>
<dbReference type="InterPro" id="IPR041727">
    <property type="entry name" value="NAGK-C"/>
</dbReference>
<dbReference type="NCBIfam" id="TIGR00761">
    <property type="entry name" value="argB"/>
    <property type="match status" value="1"/>
</dbReference>
<dbReference type="PANTHER" id="PTHR23342">
    <property type="entry name" value="N-ACETYLGLUTAMATE SYNTHASE"/>
    <property type="match status" value="1"/>
</dbReference>
<dbReference type="PANTHER" id="PTHR23342:SF0">
    <property type="entry name" value="N-ACETYLGLUTAMATE SYNTHASE, MITOCHONDRIAL"/>
    <property type="match status" value="1"/>
</dbReference>
<dbReference type="Pfam" id="PF00696">
    <property type="entry name" value="AA_kinase"/>
    <property type="match status" value="1"/>
</dbReference>
<dbReference type="PIRSF" id="PIRSF000728">
    <property type="entry name" value="NAGK"/>
    <property type="match status" value="1"/>
</dbReference>
<dbReference type="SUPFAM" id="SSF53633">
    <property type="entry name" value="Carbamate kinase-like"/>
    <property type="match status" value="1"/>
</dbReference>
<protein>
    <recommendedName>
        <fullName evidence="1">Acetylglutamate kinase</fullName>
        <ecNumber evidence="1">2.7.2.8</ecNumber>
    </recommendedName>
    <alternativeName>
        <fullName evidence="1">N-acetyl-L-glutamate 5-phosphotransferase</fullName>
    </alternativeName>
    <alternativeName>
        <fullName evidence="1">NAG kinase</fullName>
        <shortName evidence="1">NAGK</shortName>
    </alternativeName>
</protein>
<evidence type="ECO:0000255" key="1">
    <source>
        <dbReference type="HAMAP-Rule" id="MF_00082"/>
    </source>
</evidence>
<feature type="chain" id="PRO_1000057537" description="Acetylglutamate kinase">
    <location>
        <begin position="1"/>
        <end position="301"/>
    </location>
</feature>
<feature type="binding site" evidence="1">
    <location>
        <begin position="64"/>
        <end position="65"/>
    </location>
    <ligand>
        <name>substrate</name>
    </ligand>
</feature>
<feature type="binding site" evidence="1">
    <location>
        <position position="86"/>
    </location>
    <ligand>
        <name>substrate</name>
    </ligand>
</feature>
<feature type="binding site" evidence="1">
    <location>
        <position position="181"/>
    </location>
    <ligand>
        <name>substrate</name>
    </ligand>
</feature>
<feature type="site" description="Transition state stabilizer" evidence="1">
    <location>
        <position position="29"/>
    </location>
</feature>
<feature type="site" description="Transition state stabilizer" evidence="1">
    <location>
        <position position="241"/>
    </location>
</feature>
<sequence length="301" mass="32330">MAQTNPKVQTLIDAIPYFKKFYGKTIVIKYGGSAQTSDDLKEKFAQDIVLLTLLGIKPVVVHGGGARITELLNKLEIPSSFVDGYRVTCKESMRVVEMVLSGEINKNIASLLNFHGAKAIGISGKDSGIIKAVPKDGGKFGYTGDITSVNGELINNLIKEGFIPVIAPIANGDEANHPGFNINADVAACEIAMALKAQKVIFLTDTIGVLNKSGELIQTLDKANVEMFKKDGTIAGGMIPKVDSCIEAIHNGVNKAHIIDGRVEHSILLELFTSDGIGTQFIRVDNPNNGIDIEKLLNKQD</sequence>
<proteinExistence type="inferred from homology"/>
<keyword id="KW-0028">Amino-acid biosynthesis</keyword>
<keyword id="KW-0055">Arginine biosynthesis</keyword>
<keyword id="KW-0067">ATP-binding</keyword>
<keyword id="KW-0963">Cytoplasm</keyword>
<keyword id="KW-0418">Kinase</keyword>
<keyword id="KW-0547">Nucleotide-binding</keyword>
<keyword id="KW-1185">Reference proteome</keyword>
<keyword id="KW-0808">Transferase</keyword>
<accession>A8EWG2</accession>
<organism>
    <name type="scientific">Aliarcobacter butzleri (strain RM4018)</name>
    <name type="common">Arcobacter butzleri</name>
    <dbReference type="NCBI Taxonomy" id="367737"/>
    <lineage>
        <taxon>Bacteria</taxon>
        <taxon>Pseudomonadati</taxon>
        <taxon>Campylobacterota</taxon>
        <taxon>Epsilonproteobacteria</taxon>
        <taxon>Campylobacterales</taxon>
        <taxon>Arcobacteraceae</taxon>
        <taxon>Aliarcobacter</taxon>
    </lineage>
</organism>